<organism>
    <name type="scientific">Pseudomonas aeruginosa (strain UCBPP-PA14)</name>
    <dbReference type="NCBI Taxonomy" id="208963"/>
    <lineage>
        <taxon>Bacteria</taxon>
        <taxon>Pseudomonadati</taxon>
        <taxon>Pseudomonadota</taxon>
        <taxon>Gammaproteobacteria</taxon>
        <taxon>Pseudomonadales</taxon>
        <taxon>Pseudomonadaceae</taxon>
        <taxon>Pseudomonas</taxon>
    </lineage>
</organism>
<sequence>MRILIANDDGVTAPGIAALYDALADHADCVVIAPDQDKSGASSSLTLDRPLHPQRLDNGFISLNGTPTDCVHLGLNGLLEELPDMVVSGINLGANLGDDVLYSGTVAAAIEGRFLKGPAFAFSLVSRLTDNLPTAMHFARLLVSAHERLAVPPRTVLNVNIPNLPLDRVRGIQLTRLGHRARAAAPVKVVNPRGKEGYWIAAAGDAEDGGPGTDFHAVMQGYVSITPLQLDRTFHEAFGGLDEWLGGLT</sequence>
<protein>
    <recommendedName>
        <fullName evidence="1">5'-nucleotidase SurE</fullName>
        <ecNumber evidence="1">3.1.3.5</ecNumber>
    </recommendedName>
    <alternativeName>
        <fullName evidence="1">Nucleoside 5'-monophosphate phosphohydrolase</fullName>
    </alternativeName>
</protein>
<evidence type="ECO:0000255" key="1">
    <source>
        <dbReference type="HAMAP-Rule" id="MF_00060"/>
    </source>
</evidence>
<feature type="chain" id="PRO_1000007768" description="5'-nucleotidase SurE">
    <location>
        <begin position="1"/>
        <end position="249"/>
    </location>
</feature>
<feature type="binding site" evidence="1">
    <location>
        <position position="8"/>
    </location>
    <ligand>
        <name>a divalent metal cation</name>
        <dbReference type="ChEBI" id="CHEBI:60240"/>
    </ligand>
</feature>
<feature type="binding site" evidence="1">
    <location>
        <position position="9"/>
    </location>
    <ligand>
        <name>a divalent metal cation</name>
        <dbReference type="ChEBI" id="CHEBI:60240"/>
    </ligand>
</feature>
<feature type="binding site" evidence="1">
    <location>
        <position position="39"/>
    </location>
    <ligand>
        <name>a divalent metal cation</name>
        <dbReference type="ChEBI" id="CHEBI:60240"/>
    </ligand>
</feature>
<feature type="binding site" evidence="1">
    <location>
        <position position="91"/>
    </location>
    <ligand>
        <name>a divalent metal cation</name>
        <dbReference type="ChEBI" id="CHEBI:60240"/>
    </ligand>
</feature>
<accession>Q02R97</accession>
<name>SURE_PSEAB</name>
<gene>
    <name evidence="1" type="primary">surE</name>
    <name type="ordered locus">PA14_17450</name>
</gene>
<keyword id="KW-0963">Cytoplasm</keyword>
<keyword id="KW-0378">Hydrolase</keyword>
<keyword id="KW-0479">Metal-binding</keyword>
<keyword id="KW-0547">Nucleotide-binding</keyword>
<comment type="function">
    <text evidence="1">Nucleotidase that shows phosphatase activity on nucleoside 5'-monophosphates.</text>
</comment>
<comment type="catalytic activity">
    <reaction evidence="1">
        <text>a ribonucleoside 5'-phosphate + H2O = a ribonucleoside + phosphate</text>
        <dbReference type="Rhea" id="RHEA:12484"/>
        <dbReference type="ChEBI" id="CHEBI:15377"/>
        <dbReference type="ChEBI" id="CHEBI:18254"/>
        <dbReference type="ChEBI" id="CHEBI:43474"/>
        <dbReference type="ChEBI" id="CHEBI:58043"/>
        <dbReference type="EC" id="3.1.3.5"/>
    </reaction>
</comment>
<comment type="cofactor">
    <cofactor evidence="1">
        <name>a divalent metal cation</name>
        <dbReference type="ChEBI" id="CHEBI:60240"/>
    </cofactor>
    <text evidence="1">Binds 1 divalent metal cation per subunit.</text>
</comment>
<comment type="subcellular location">
    <subcellularLocation>
        <location evidence="1">Cytoplasm</location>
    </subcellularLocation>
</comment>
<comment type="similarity">
    <text evidence="1">Belongs to the SurE nucleotidase family.</text>
</comment>
<proteinExistence type="inferred from homology"/>
<dbReference type="EC" id="3.1.3.5" evidence="1"/>
<dbReference type="EMBL" id="CP000438">
    <property type="protein sequence ID" value="ABJ12858.1"/>
    <property type="molecule type" value="Genomic_DNA"/>
</dbReference>
<dbReference type="RefSeq" id="WP_003092341.1">
    <property type="nucleotide sequence ID" value="NZ_CP034244.1"/>
</dbReference>
<dbReference type="SMR" id="Q02R97"/>
<dbReference type="KEGG" id="pau:PA14_17450"/>
<dbReference type="PseudoCAP" id="PA14_17450"/>
<dbReference type="HOGENOM" id="CLU_045192_1_2_6"/>
<dbReference type="BioCyc" id="PAER208963:G1G74-1436-MONOMER"/>
<dbReference type="Proteomes" id="UP000000653">
    <property type="component" value="Chromosome"/>
</dbReference>
<dbReference type="GO" id="GO:0005737">
    <property type="term" value="C:cytoplasm"/>
    <property type="evidence" value="ECO:0007669"/>
    <property type="project" value="UniProtKB-SubCell"/>
</dbReference>
<dbReference type="GO" id="GO:0008254">
    <property type="term" value="F:3'-nucleotidase activity"/>
    <property type="evidence" value="ECO:0007669"/>
    <property type="project" value="TreeGrafter"/>
</dbReference>
<dbReference type="GO" id="GO:0008253">
    <property type="term" value="F:5'-nucleotidase activity"/>
    <property type="evidence" value="ECO:0007669"/>
    <property type="project" value="UniProtKB-UniRule"/>
</dbReference>
<dbReference type="GO" id="GO:0004309">
    <property type="term" value="F:exopolyphosphatase activity"/>
    <property type="evidence" value="ECO:0007669"/>
    <property type="project" value="TreeGrafter"/>
</dbReference>
<dbReference type="GO" id="GO:0046872">
    <property type="term" value="F:metal ion binding"/>
    <property type="evidence" value="ECO:0007669"/>
    <property type="project" value="UniProtKB-UniRule"/>
</dbReference>
<dbReference type="GO" id="GO:0000166">
    <property type="term" value="F:nucleotide binding"/>
    <property type="evidence" value="ECO:0007669"/>
    <property type="project" value="UniProtKB-KW"/>
</dbReference>
<dbReference type="FunFam" id="3.40.1210.10:FF:000001">
    <property type="entry name" value="5'/3'-nucleotidase SurE"/>
    <property type="match status" value="1"/>
</dbReference>
<dbReference type="Gene3D" id="3.40.1210.10">
    <property type="entry name" value="Survival protein SurE-like phosphatase/nucleotidase"/>
    <property type="match status" value="1"/>
</dbReference>
<dbReference type="HAMAP" id="MF_00060">
    <property type="entry name" value="SurE"/>
    <property type="match status" value="1"/>
</dbReference>
<dbReference type="InterPro" id="IPR030048">
    <property type="entry name" value="SurE"/>
</dbReference>
<dbReference type="InterPro" id="IPR002828">
    <property type="entry name" value="SurE-like_Pase/nucleotidase"/>
</dbReference>
<dbReference type="InterPro" id="IPR036523">
    <property type="entry name" value="SurE-like_sf"/>
</dbReference>
<dbReference type="NCBIfam" id="NF001489">
    <property type="entry name" value="PRK00346.1-3"/>
    <property type="match status" value="1"/>
</dbReference>
<dbReference type="NCBIfam" id="NF001490">
    <property type="entry name" value="PRK00346.1-4"/>
    <property type="match status" value="1"/>
</dbReference>
<dbReference type="NCBIfam" id="TIGR00087">
    <property type="entry name" value="surE"/>
    <property type="match status" value="1"/>
</dbReference>
<dbReference type="PANTHER" id="PTHR30457">
    <property type="entry name" value="5'-NUCLEOTIDASE SURE"/>
    <property type="match status" value="1"/>
</dbReference>
<dbReference type="PANTHER" id="PTHR30457:SF12">
    <property type="entry name" value="5'_3'-NUCLEOTIDASE SURE"/>
    <property type="match status" value="1"/>
</dbReference>
<dbReference type="Pfam" id="PF01975">
    <property type="entry name" value="SurE"/>
    <property type="match status" value="1"/>
</dbReference>
<dbReference type="SUPFAM" id="SSF64167">
    <property type="entry name" value="SurE-like"/>
    <property type="match status" value="1"/>
</dbReference>
<reference key="1">
    <citation type="journal article" date="2006" name="Genome Biol.">
        <title>Genomic analysis reveals that Pseudomonas aeruginosa virulence is combinatorial.</title>
        <authorList>
            <person name="Lee D.G."/>
            <person name="Urbach J.M."/>
            <person name="Wu G."/>
            <person name="Liberati N.T."/>
            <person name="Feinbaum R.L."/>
            <person name="Miyata S."/>
            <person name="Diggins L.T."/>
            <person name="He J."/>
            <person name="Saucier M."/>
            <person name="Deziel E."/>
            <person name="Friedman L."/>
            <person name="Li L."/>
            <person name="Grills G."/>
            <person name="Montgomery K."/>
            <person name="Kucherlapati R."/>
            <person name="Rahme L.G."/>
            <person name="Ausubel F.M."/>
        </authorList>
    </citation>
    <scope>NUCLEOTIDE SEQUENCE [LARGE SCALE GENOMIC DNA]</scope>
    <source>
        <strain>UCBPP-PA14</strain>
    </source>
</reference>